<name>VACHT_MACFU</name>
<proteinExistence type="inferred from homology"/>
<accession>Q28487</accession>
<reference key="1">
    <citation type="journal article" date="1997" name="Brain Res. Mol. Brain Res.">
        <title>Human choline acetyltransferase mRNAs with different 5'-region produce a 69-kDa major translation product.</title>
        <authorList>
            <person name="Misawa H."/>
            <person name="Matsuura J."/>
            <person name="Oda Y."/>
            <person name="Takahashi R."/>
            <person name="Deguchi T."/>
        </authorList>
    </citation>
    <scope>NUCLEOTIDE SEQUENCE [GENOMIC DNA]</scope>
    <source>
        <tissue>Blood</tissue>
    </source>
</reference>
<evidence type="ECO:0000250" key="1">
    <source>
        <dbReference type="UniProtKB" id="O35304"/>
    </source>
</evidence>
<evidence type="ECO:0000250" key="2">
    <source>
        <dbReference type="UniProtKB" id="Q16572"/>
    </source>
</evidence>
<evidence type="ECO:0000250" key="3">
    <source>
        <dbReference type="UniProtKB" id="Q62666"/>
    </source>
</evidence>
<evidence type="ECO:0000255" key="4"/>
<evidence type="ECO:0000256" key="5">
    <source>
        <dbReference type="SAM" id="MobiDB-lite"/>
    </source>
</evidence>
<evidence type="ECO:0000305" key="6"/>
<comment type="function">
    <text evidence="1 2 3">Electrogenic antiporter that exchanges one cholinergic neurotransmitter, acetylcholine or choline, with two intravesicular protons across the membrane of synaptic vesicles. Uses the electrochemical proton gradient established by the V-type proton-pump ATPase to store neurotransmitters inside the vesicles prior to their release via exocytosis (By similarity). Determines cholinergic vesicular quantal size at presynaptic nerve terminals in developing neuro-muscular junctions with an impact on motor neuron differentiation and innervation pattern (By similarity). Part of forebrain cholinergic system, regulates hippocampal synapse transmissions that underlie spatial memory formation (By similarity). Can transport serotonin.</text>
</comment>
<comment type="catalytic activity">
    <reaction evidence="2">
        <text>acetylcholine(out) + 2 H(+)(in) = acetylcholine(in) + 2 H(+)(out)</text>
        <dbReference type="Rhea" id="RHEA:72891"/>
        <dbReference type="ChEBI" id="CHEBI:15355"/>
        <dbReference type="ChEBI" id="CHEBI:15378"/>
    </reaction>
    <physiologicalReaction direction="left-to-right" evidence="2">
        <dbReference type="Rhea" id="RHEA:72892"/>
    </physiologicalReaction>
</comment>
<comment type="catalytic activity">
    <reaction evidence="3">
        <text>choline(in) + 2 H(+)(out) = choline(out) + 2 H(+)(in)</text>
        <dbReference type="Rhea" id="RHEA:73819"/>
        <dbReference type="ChEBI" id="CHEBI:15354"/>
        <dbReference type="ChEBI" id="CHEBI:15378"/>
    </reaction>
    <physiologicalReaction direction="left-to-right" evidence="3">
        <dbReference type="Rhea" id="RHEA:73820"/>
    </physiologicalReaction>
</comment>
<comment type="catalytic activity">
    <reaction evidence="2">
        <text>serotonin(in) + 2 H(+)(out) = serotonin(out) + 2 H(+)(in)</text>
        <dbReference type="Rhea" id="RHEA:73743"/>
        <dbReference type="ChEBI" id="CHEBI:15378"/>
        <dbReference type="ChEBI" id="CHEBI:350546"/>
    </reaction>
</comment>
<comment type="subunit">
    <text evidence="1">Interacts with SEC14L1.</text>
</comment>
<comment type="subcellular location">
    <subcellularLocation>
        <location evidence="3">Cytoplasmic vesicle</location>
        <location evidence="3">Secretory vesicle</location>
        <location evidence="3">Synaptic vesicle membrane</location>
        <topology evidence="4">Multi-pass membrane protein</topology>
    </subcellularLocation>
</comment>
<comment type="similarity">
    <text evidence="6">Belongs to the major facilitator superfamily. Vesicular transporter family.</text>
</comment>
<organism>
    <name type="scientific">Macaca fuscata fuscata</name>
    <name type="common">Japanese macaque</name>
    <dbReference type="NCBI Taxonomy" id="9543"/>
    <lineage>
        <taxon>Eukaryota</taxon>
        <taxon>Metazoa</taxon>
        <taxon>Chordata</taxon>
        <taxon>Craniata</taxon>
        <taxon>Vertebrata</taxon>
        <taxon>Euteleostomi</taxon>
        <taxon>Mammalia</taxon>
        <taxon>Eutheria</taxon>
        <taxon>Euarchontoglires</taxon>
        <taxon>Primates</taxon>
        <taxon>Haplorrhini</taxon>
        <taxon>Catarrhini</taxon>
        <taxon>Cercopithecidae</taxon>
        <taxon>Cercopithecinae</taxon>
        <taxon>Macaca</taxon>
    </lineage>
</organism>
<protein>
    <recommendedName>
        <fullName>Vesicular acetylcholine transporter</fullName>
        <shortName>VAChT</shortName>
    </recommendedName>
    <alternativeName>
        <fullName>Solute carrier family 18 member 3</fullName>
    </alternativeName>
</protein>
<sequence length="66" mass="7254">GMGLANLLYAPVLLLLRNVGLLTRSRSERDVLLDEPPQGLYDAVRLRERPVSGQDGEPRSPPGPFD</sequence>
<keyword id="KW-0968">Cytoplasmic vesicle</keyword>
<keyword id="KW-0472">Membrane</keyword>
<keyword id="KW-0532">Neurotransmitter transport</keyword>
<keyword id="KW-0770">Synapse</keyword>
<keyword id="KW-0812">Transmembrane</keyword>
<keyword id="KW-1133">Transmembrane helix</keyword>
<keyword id="KW-0813">Transport</keyword>
<feature type="chain" id="PRO_0000127518" description="Vesicular acetylcholine transporter">
    <location>
        <begin position="1" status="less than"/>
        <end position="66" status="greater than"/>
    </location>
</feature>
<feature type="transmembrane region" description="Helical" evidence="4">
    <location>
        <begin position="1" status="less than"/>
        <end position="15"/>
    </location>
</feature>
<feature type="topological domain" description="Cytoplasmic" evidence="4">
    <location>
        <begin position="16"/>
        <end position="66" status="greater than"/>
    </location>
</feature>
<feature type="region of interest" description="Disordered" evidence="5">
    <location>
        <begin position="43"/>
        <end position="66"/>
    </location>
</feature>
<feature type="non-terminal residue">
    <location>
        <position position="1"/>
    </location>
</feature>
<feature type="non-terminal residue">
    <location>
        <position position="66"/>
    </location>
</feature>
<gene>
    <name type="primary">SLC18A3</name>
</gene>
<dbReference type="EMBL" id="D83487">
    <property type="protein sequence ID" value="BAA11930.1"/>
    <property type="molecule type" value="Genomic_DNA"/>
</dbReference>
<dbReference type="GO" id="GO:0030672">
    <property type="term" value="C:synaptic vesicle membrane"/>
    <property type="evidence" value="ECO:0007669"/>
    <property type="project" value="UniProtKB-SubCell"/>
</dbReference>
<dbReference type="GO" id="GO:0006836">
    <property type="term" value="P:neurotransmitter transport"/>
    <property type="evidence" value="ECO:0007669"/>
    <property type="project" value="UniProtKB-KW"/>
</dbReference>